<comment type="function">
    <text evidence="1">Maintains chromatin CpG methylation that plays a role in genomic imprinting, regulation of embryogenesis and seed viability. Required for proper patterns of CG DNA methylation in dividing cells (By similarity).</text>
</comment>
<comment type="catalytic activity">
    <reaction evidence="4">
        <text>a 2'-deoxycytidine in DNA + S-adenosyl-L-methionine = a 5-methyl-2'-deoxycytidine in DNA + S-adenosyl-L-homocysteine + H(+)</text>
        <dbReference type="Rhea" id="RHEA:13681"/>
        <dbReference type="Rhea" id="RHEA-COMP:11369"/>
        <dbReference type="Rhea" id="RHEA-COMP:11370"/>
        <dbReference type="ChEBI" id="CHEBI:15378"/>
        <dbReference type="ChEBI" id="CHEBI:57856"/>
        <dbReference type="ChEBI" id="CHEBI:59789"/>
        <dbReference type="ChEBI" id="CHEBI:85452"/>
        <dbReference type="ChEBI" id="CHEBI:85454"/>
        <dbReference type="EC" id="2.1.1.37"/>
    </reaction>
</comment>
<comment type="subcellular location">
    <subcellularLocation>
        <location evidence="7">Nucleus</location>
    </subcellularLocation>
</comment>
<comment type="tissue specificity">
    <text evidence="6">Expressed at low levels in vegetative and floral organs.</text>
</comment>
<comment type="similarity">
    <text evidence="3">Belongs to the class I-like SAM-binding methyltransferase superfamily. C5-methyltransferase family.</text>
</comment>
<proteinExistence type="evidence at transcript level"/>
<sequence>METKVGKQKKRSVDSNDDVSKERRPKRAAACRNFKEKPLRISDKSETVEAKKEQNVVEEIVAIQLTSSLESNDDPRPNRRLTDFVLHNSDGVPQPVEMLELGDIFLEGVVLPLGDDKNEEKGVRFQSFGRVENWNISGYEDGSPGIWISTALADYDCRKPASKYKKIYDYFFEKACACVEVFKSLSKNPDTSLDELLAAVARSMSGSKIFSSGGAIQEFVISQGEFIYNQLAGLDETAKNHETCFVENSVLVSLRDHESSKIHKALSNVALRIDESQLVKSDHLVDGAEAEDVRYAKLIQEEEYRISMERSRNKRSSTTSASNKFYIKINEHEIANDYPLPSYYKNTKEETDELLLFEPGYEVDTRDLPCRTLHNWALYNSDSRMISLEVLPMRPCAEIDVTVFGSGVVAEDDGSGFCLDDSESSTSTQSNVHDGMNIFLSQIKEWMIEFGAEMIFVTLRTDMAWYRLGKPSKQYAPWFETVMKTVRVAISIFNMLMRESRVAKLSYANVIKRLCGLEENDKAYISSKLLDVERYVVVHGQIILQLFEEYPDKDIKRCPFVTGLASKMQDIHHTKWIIKRKKKILQKGKNLNPRAGLAHVVTRMKPMQATTTRLVNRIWGEFYSIYSPEVPSEAIHEVEEEEIEEDEEEDENEEDDIEEEAVEVQKSHTPKKSRGNSEDMEIKWNGEILGETSDGEPLYGRALVGGETVAVGSAVILEVDDPDETPAIYFVEFMFESSDQCKMLHGKLLQRGSETVIGTAANERELFLTNECLTVHLKDIKGTVSLDIRSRPWGHQYRKENLVVDKLDRARAEERKANGLPTEYYCKSLYSPERGGFFSLPRNDIGLGSGFCSSCKIKEEEEERSKTKLNISKTGVFSNGIEYYNGDFVYVLPNYITKDGLKKGTSRRTTLKCGRNVGLKAFVVCQLLDVIVLEESRKASNASFQVKLTRFYRPEDISEEKAYASDIQELYYSHDTYILPPEALQGKCEVRKKNDMPLCREYPILDHIFFCEVFYDSSTGYLKQFPANMKLKFSTIKDETLLREKKGKGVETGTSSGILMKPDEVPKEMRLATLDIFAGCGGLSHGLEKAGVSNTKWAIEYEEPAGHAFKQNHPEATVFVDNCNVILRAIMEKCGDVDDCVSTVEAAELVAKLDENQKSTLPLPGQADFISGGPPCQGFSGMNRFSDGSWSKVQCEMILAFLSFADYFRPKYFLLENVKKFVTYNKGRTFQLTMASLLEIGYQVRFGILEAGTYGVSQPRKRVIIWAASPEEVLPEWPEPMHVFDNPGSKISLPRGLHYDTVRNTKFGAPFRSITVRDTIGDLPLVENGESKINKEYRTTPVSWFQKKIRGNMSVLTDHICKGLNELNLIRCKKIPKRPGADWRDLPDENVTLSNGLVEKLRPLALSKTAKNHNEWKGLYGRLDWQGNLPISITDPQPMGKVGMCFHPEQDRIITVRECARSQGFPDSYEFSGTTKHKHRQIGNAVPPPLAFALGRKLKEALYLKSSLQHQS</sequence>
<reference key="1">
    <citation type="journal article" date="1999" name="Nature">
        <title>Sequence and analysis of chromosome 4 of the plant Arabidopsis thaliana.</title>
        <authorList>
            <person name="Mayer K.F.X."/>
            <person name="Schueller C."/>
            <person name="Wambutt R."/>
            <person name="Murphy G."/>
            <person name="Volckaert G."/>
            <person name="Pohl T."/>
            <person name="Duesterhoeft A."/>
            <person name="Stiekema W."/>
            <person name="Entian K.-D."/>
            <person name="Terryn N."/>
            <person name="Harris B."/>
            <person name="Ansorge W."/>
            <person name="Brandt P."/>
            <person name="Grivell L.A."/>
            <person name="Rieger M."/>
            <person name="Weichselgartner M."/>
            <person name="de Simone V."/>
            <person name="Obermaier B."/>
            <person name="Mache R."/>
            <person name="Mueller M."/>
            <person name="Kreis M."/>
            <person name="Delseny M."/>
            <person name="Puigdomenech P."/>
            <person name="Watson M."/>
            <person name="Schmidtheini T."/>
            <person name="Reichert B."/>
            <person name="Portetelle D."/>
            <person name="Perez-Alonso M."/>
            <person name="Boutry M."/>
            <person name="Bancroft I."/>
            <person name="Vos P."/>
            <person name="Hoheisel J."/>
            <person name="Zimmermann W."/>
            <person name="Wedler H."/>
            <person name="Ridley P."/>
            <person name="Langham S.-A."/>
            <person name="McCullagh B."/>
            <person name="Bilham L."/>
            <person name="Robben J."/>
            <person name="van der Schueren J."/>
            <person name="Grymonprez B."/>
            <person name="Chuang Y.-J."/>
            <person name="Vandenbussche F."/>
            <person name="Braeken M."/>
            <person name="Weltjens I."/>
            <person name="Voet M."/>
            <person name="Bastiaens I."/>
            <person name="Aert R."/>
            <person name="Defoor E."/>
            <person name="Weitzenegger T."/>
            <person name="Bothe G."/>
            <person name="Ramsperger U."/>
            <person name="Hilbert H."/>
            <person name="Braun M."/>
            <person name="Holzer E."/>
            <person name="Brandt A."/>
            <person name="Peters S."/>
            <person name="van Staveren M."/>
            <person name="Dirkse W."/>
            <person name="Mooijman P."/>
            <person name="Klein Lankhorst R."/>
            <person name="Rose M."/>
            <person name="Hauf J."/>
            <person name="Koetter P."/>
            <person name="Berneiser S."/>
            <person name="Hempel S."/>
            <person name="Feldpausch M."/>
            <person name="Lamberth S."/>
            <person name="Van den Daele H."/>
            <person name="De Keyser A."/>
            <person name="Buysshaert C."/>
            <person name="Gielen J."/>
            <person name="Villarroel R."/>
            <person name="De Clercq R."/>
            <person name="van Montagu M."/>
            <person name="Rogers J."/>
            <person name="Cronin A."/>
            <person name="Quail M.A."/>
            <person name="Bray-Allen S."/>
            <person name="Clark L."/>
            <person name="Doggett J."/>
            <person name="Hall S."/>
            <person name="Kay M."/>
            <person name="Lennard N."/>
            <person name="McLay K."/>
            <person name="Mayes R."/>
            <person name="Pettett A."/>
            <person name="Rajandream M.A."/>
            <person name="Lyne M."/>
            <person name="Benes V."/>
            <person name="Rechmann S."/>
            <person name="Borkova D."/>
            <person name="Bloecker H."/>
            <person name="Scharfe M."/>
            <person name="Grimm M."/>
            <person name="Loehnert T.-H."/>
            <person name="Dose S."/>
            <person name="de Haan M."/>
            <person name="Maarse A.C."/>
            <person name="Schaefer M."/>
            <person name="Mueller-Auer S."/>
            <person name="Gabel C."/>
            <person name="Fuchs M."/>
            <person name="Fartmann B."/>
            <person name="Granderath K."/>
            <person name="Dauner D."/>
            <person name="Herzl A."/>
            <person name="Neumann S."/>
            <person name="Argiriou A."/>
            <person name="Vitale D."/>
            <person name="Liguori R."/>
            <person name="Piravandi E."/>
            <person name="Massenet O."/>
            <person name="Quigley F."/>
            <person name="Clabauld G."/>
            <person name="Muendlein A."/>
            <person name="Felber R."/>
            <person name="Schnabl S."/>
            <person name="Hiller R."/>
            <person name="Schmidt W."/>
            <person name="Lecharny A."/>
            <person name="Aubourg S."/>
            <person name="Chefdor F."/>
            <person name="Cooke R."/>
            <person name="Berger C."/>
            <person name="Monfort A."/>
            <person name="Casacuberta E."/>
            <person name="Gibbons T."/>
            <person name="Weber N."/>
            <person name="Vandenbol M."/>
            <person name="Bargues M."/>
            <person name="Terol J."/>
            <person name="Torres A."/>
            <person name="Perez-Perez A."/>
            <person name="Purnelle B."/>
            <person name="Bent E."/>
            <person name="Johnson S."/>
            <person name="Tacon D."/>
            <person name="Jesse T."/>
            <person name="Heijnen L."/>
            <person name="Schwarz S."/>
            <person name="Scholler P."/>
            <person name="Heber S."/>
            <person name="Francs P."/>
            <person name="Bielke C."/>
            <person name="Frishman D."/>
            <person name="Haase D."/>
            <person name="Lemcke K."/>
            <person name="Mewes H.-W."/>
            <person name="Stocker S."/>
            <person name="Zaccaria P."/>
            <person name="Bevan M."/>
            <person name="Wilson R.K."/>
            <person name="de la Bastide M."/>
            <person name="Habermann K."/>
            <person name="Parnell L."/>
            <person name="Dedhia N."/>
            <person name="Gnoj L."/>
            <person name="Schutz K."/>
            <person name="Huang E."/>
            <person name="Spiegel L."/>
            <person name="Sekhon M."/>
            <person name="Murray J."/>
            <person name="Sheet P."/>
            <person name="Cordes M."/>
            <person name="Abu-Threideh J."/>
            <person name="Stoneking T."/>
            <person name="Kalicki J."/>
            <person name="Graves T."/>
            <person name="Harmon G."/>
            <person name="Edwards J."/>
            <person name="Latreille P."/>
            <person name="Courtney L."/>
            <person name="Cloud J."/>
            <person name="Abbott A."/>
            <person name="Scott K."/>
            <person name="Johnson D."/>
            <person name="Minx P."/>
            <person name="Bentley D."/>
            <person name="Fulton B."/>
            <person name="Miller N."/>
            <person name="Greco T."/>
            <person name="Kemp K."/>
            <person name="Kramer J."/>
            <person name="Fulton L."/>
            <person name="Mardis E."/>
            <person name="Dante M."/>
            <person name="Pepin K."/>
            <person name="Hillier L.W."/>
            <person name="Nelson J."/>
            <person name="Spieth J."/>
            <person name="Ryan E."/>
            <person name="Andrews S."/>
            <person name="Geisel C."/>
            <person name="Layman D."/>
            <person name="Du H."/>
            <person name="Ali J."/>
            <person name="Berghoff A."/>
            <person name="Jones K."/>
            <person name="Drone K."/>
            <person name="Cotton M."/>
            <person name="Joshu C."/>
            <person name="Antonoiu B."/>
            <person name="Zidanic M."/>
            <person name="Strong C."/>
            <person name="Sun H."/>
            <person name="Lamar B."/>
            <person name="Yordan C."/>
            <person name="Ma P."/>
            <person name="Zhong J."/>
            <person name="Preston R."/>
            <person name="Vil D."/>
            <person name="Shekher M."/>
            <person name="Matero A."/>
            <person name="Shah R."/>
            <person name="Swaby I.K."/>
            <person name="O'Shaughnessy A."/>
            <person name="Rodriguez M."/>
            <person name="Hoffman J."/>
            <person name="Till S."/>
            <person name="Granat S."/>
            <person name="Shohdy N."/>
            <person name="Hasegawa A."/>
            <person name="Hameed A."/>
            <person name="Lodhi M."/>
            <person name="Johnson A."/>
            <person name="Chen E."/>
            <person name="Marra M.A."/>
            <person name="Martienssen R."/>
            <person name="McCombie W.R."/>
        </authorList>
    </citation>
    <scope>NUCLEOTIDE SEQUENCE [LARGE SCALE GENOMIC DNA]</scope>
    <source>
        <strain>cv. Columbia</strain>
    </source>
</reference>
<reference key="2">
    <citation type="journal article" date="2017" name="Plant J.">
        <title>Araport11: a complete reannotation of the Arabidopsis thaliana reference genome.</title>
        <authorList>
            <person name="Cheng C.Y."/>
            <person name="Krishnakumar V."/>
            <person name="Chan A.P."/>
            <person name="Thibaud-Nissen F."/>
            <person name="Schobel S."/>
            <person name="Town C.D."/>
        </authorList>
    </citation>
    <scope>GENOME REANNOTATION</scope>
    <source>
        <strain>cv. Columbia</strain>
    </source>
</reference>
<reference key="3">
    <citation type="journal article" date="1999" name="Plant Mol. Biol.">
        <title>Multiple DNA methyltransferase genes in Arabidopsis thaliana.</title>
        <authorList>
            <person name="Genger R.K."/>
            <person name="Kovac K.A."/>
            <person name="Dennis E.S."/>
            <person name="Peacock W.J."/>
            <person name="Finnegan E.J."/>
        </authorList>
    </citation>
    <scope>TISSUE SPECIFICITY</scope>
    <scope>GENE FAMILY</scope>
    <source>
        <strain>cv. Columbia</strain>
    </source>
</reference>
<reference key="4">
    <citation type="journal article" date="2011" name="Proc. Natl. Acad. Sci. U.S.A.">
        <title>Regulation of imprinted gene expression in Arabidopsis endosperm.</title>
        <authorList>
            <person name="Hsieh T.-F."/>
            <person name="Shin J."/>
            <person name="Uzawa R."/>
            <person name="Silva P."/>
            <person name="Cohen S."/>
            <person name="Bauer M.J."/>
            <person name="Hashimoto M."/>
            <person name="Kirkbride R.C."/>
            <person name="Harada J.J."/>
            <person name="Zilberman D."/>
            <person name="Fischer R.L."/>
        </authorList>
    </citation>
    <scope>GENE FAMILY</scope>
    <scope>NOMENCLATURE</scope>
</reference>
<gene>
    <name type="primary">MET2</name>
    <name type="synonym">METIIb</name>
    <name type="ordered locus">At4g08990</name>
    <name type="ORF">F23J3.20</name>
</gene>
<accession>Q9M0S8</accession>
<keyword id="KW-0156">Chromatin regulator</keyword>
<keyword id="KW-0238">DNA-binding</keyword>
<keyword id="KW-0489">Methyltransferase</keyword>
<keyword id="KW-0539">Nucleus</keyword>
<keyword id="KW-1185">Reference proteome</keyword>
<keyword id="KW-0677">Repeat</keyword>
<keyword id="KW-0949">S-adenosyl-L-methionine</keyword>
<keyword id="KW-0808">Transferase</keyword>
<feature type="chain" id="PRO_0000430011" description="DNA (cytosine-5)-methyltransferase 2">
    <location>
        <begin position="1"/>
        <end position="1512"/>
    </location>
</feature>
<feature type="domain" description="BAH 1" evidence="2">
    <location>
        <begin position="707"/>
        <end position="841"/>
    </location>
</feature>
<feature type="domain" description="BAH 2" evidence="2">
    <location>
        <begin position="909"/>
        <end position="1026"/>
    </location>
</feature>
<feature type="domain" description="SAM-dependent MTase C5-type" evidence="3">
    <location>
        <begin position="1071"/>
        <end position="1505"/>
    </location>
</feature>
<feature type="region of interest" description="Disordered" evidence="5">
    <location>
        <begin position="1"/>
        <end position="35"/>
    </location>
</feature>
<feature type="region of interest" description="Disordered" evidence="5">
    <location>
        <begin position="634"/>
        <end position="678"/>
    </location>
</feature>
<feature type="compositionally biased region" description="Basic and acidic residues" evidence="5">
    <location>
        <begin position="1"/>
        <end position="22"/>
    </location>
</feature>
<feature type="compositionally biased region" description="Acidic residues" evidence="5">
    <location>
        <begin position="638"/>
        <end position="662"/>
    </location>
</feature>
<feature type="active site" evidence="3 4">
    <location>
        <position position="1176"/>
    </location>
</feature>
<evidence type="ECO:0000250" key="1"/>
<evidence type="ECO:0000255" key="2">
    <source>
        <dbReference type="PROSITE-ProRule" id="PRU00370"/>
    </source>
</evidence>
<evidence type="ECO:0000255" key="3">
    <source>
        <dbReference type="PROSITE-ProRule" id="PRU01016"/>
    </source>
</evidence>
<evidence type="ECO:0000255" key="4">
    <source>
        <dbReference type="PROSITE-ProRule" id="PRU10018"/>
    </source>
</evidence>
<evidence type="ECO:0000256" key="5">
    <source>
        <dbReference type="SAM" id="MobiDB-lite"/>
    </source>
</evidence>
<evidence type="ECO:0000269" key="6">
    <source>
    </source>
</evidence>
<evidence type="ECO:0000305" key="7"/>
<organism>
    <name type="scientific">Arabidopsis thaliana</name>
    <name type="common">Mouse-ear cress</name>
    <dbReference type="NCBI Taxonomy" id="3702"/>
    <lineage>
        <taxon>Eukaryota</taxon>
        <taxon>Viridiplantae</taxon>
        <taxon>Streptophyta</taxon>
        <taxon>Embryophyta</taxon>
        <taxon>Tracheophyta</taxon>
        <taxon>Spermatophyta</taxon>
        <taxon>Magnoliopsida</taxon>
        <taxon>eudicotyledons</taxon>
        <taxon>Gunneridae</taxon>
        <taxon>Pentapetalae</taxon>
        <taxon>rosids</taxon>
        <taxon>malvids</taxon>
        <taxon>Brassicales</taxon>
        <taxon>Brassicaceae</taxon>
        <taxon>Camelineae</taxon>
        <taxon>Arabidopsis</taxon>
    </lineage>
</organism>
<protein>
    <recommendedName>
        <fullName>DNA (cytosine-5)-methyltransferase 2</fullName>
        <ecNumber>2.1.1.37</ecNumber>
    </recommendedName>
    <alternativeName>
        <fullName>DNA methyltransferase 2</fullName>
    </alternativeName>
    <alternativeName>
        <fullName>DNA methyltransferase IIb</fullName>
    </alternativeName>
</protein>
<dbReference type="EC" id="2.1.1.37"/>
<dbReference type="EMBL" id="AL161513">
    <property type="protein sequence ID" value="CAB78023.1"/>
    <property type="molecule type" value="Genomic_DNA"/>
</dbReference>
<dbReference type="EMBL" id="CP002687">
    <property type="protein sequence ID" value="AEE82708.1"/>
    <property type="molecule type" value="Genomic_DNA"/>
</dbReference>
<dbReference type="PIR" id="G85090">
    <property type="entry name" value="G85090"/>
</dbReference>
<dbReference type="RefSeq" id="NP_192638.1">
    <property type="nucleotide sequence ID" value="NM_116968.1"/>
</dbReference>
<dbReference type="SMR" id="Q9M0S8"/>
<dbReference type="FunCoup" id="Q9M0S8">
    <property type="interactions" value="2107"/>
</dbReference>
<dbReference type="STRING" id="3702.Q9M0S8"/>
<dbReference type="REBASE" id="35200">
    <property type="entry name" value="M.AthMET2b"/>
</dbReference>
<dbReference type="GlyGen" id="Q9M0S8">
    <property type="glycosylation" value="2 sites, 1 O-linked glycan (2 sites)"/>
</dbReference>
<dbReference type="iPTMnet" id="Q9M0S8"/>
<dbReference type="PaxDb" id="3702-AT4G08990.1"/>
<dbReference type="EnsemblPlants" id="AT4G08990.1">
    <property type="protein sequence ID" value="AT4G08990.1"/>
    <property type="gene ID" value="AT4G08990"/>
</dbReference>
<dbReference type="GeneID" id="826477"/>
<dbReference type="Gramene" id="AT4G08990.1">
    <property type="protein sequence ID" value="AT4G08990.1"/>
    <property type="gene ID" value="AT4G08990"/>
</dbReference>
<dbReference type="KEGG" id="ath:AT4G08990"/>
<dbReference type="Araport" id="AT4G08990"/>
<dbReference type="TAIR" id="AT4G08990"/>
<dbReference type="eggNOG" id="ENOG502QPKK">
    <property type="taxonomic scope" value="Eukaryota"/>
</dbReference>
<dbReference type="HOGENOM" id="CLU_002247_0_0_1"/>
<dbReference type="InParanoid" id="Q9M0S8"/>
<dbReference type="OMA" id="GWAISGY"/>
<dbReference type="PhylomeDB" id="Q9M0S8"/>
<dbReference type="PRO" id="PR:Q9M0S8"/>
<dbReference type="Proteomes" id="UP000006548">
    <property type="component" value="Chromosome 4"/>
</dbReference>
<dbReference type="ExpressionAtlas" id="Q9M0S8">
    <property type="expression patterns" value="baseline and differential"/>
</dbReference>
<dbReference type="GO" id="GO:0005634">
    <property type="term" value="C:nucleus"/>
    <property type="evidence" value="ECO:0007669"/>
    <property type="project" value="UniProtKB-SubCell"/>
</dbReference>
<dbReference type="GO" id="GO:0003682">
    <property type="term" value="F:chromatin binding"/>
    <property type="evidence" value="ECO:0007669"/>
    <property type="project" value="InterPro"/>
</dbReference>
<dbReference type="GO" id="GO:0003886">
    <property type="term" value="F:DNA (cytosine-5-)-methyltransferase activity"/>
    <property type="evidence" value="ECO:0007669"/>
    <property type="project" value="UniProtKB-EC"/>
</dbReference>
<dbReference type="GO" id="GO:0003677">
    <property type="term" value="F:DNA binding"/>
    <property type="evidence" value="ECO:0007669"/>
    <property type="project" value="UniProtKB-KW"/>
</dbReference>
<dbReference type="GO" id="GO:0006346">
    <property type="term" value="P:DNA methylation-dependent constitutive heterochromatin formation"/>
    <property type="evidence" value="ECO:0007669"/>
    <property type="project" value="InterPro"/>
</dbReference>
<dbReference type="GO" id="GO:0032259">
    <property type="term" value="P:methylation"/>
    <property type="evidence" value="ECO:0007669"/>
    <property type="project" value="UniProtKB-KW"/>
</dbReference>
<dbReference type="CDD" id="cd04712">
    <property type="entry name" value="BAH_DCM_I"/>
    <property type="match status" value="1"/>
</dbReference>
<dbReference type="CDD" id="cd04708">
    <property type="entry name" value="BAH_plantDCM_II"/>
    <property type="match status" value="1"/>
</dbReference>
<dbReference type="FunFam" id="3.40.50.150:FF:000108">
    <property type="entry name" value="DNA (cytosine-5)-methyltransferase"/>
    <property type="match status" value="1"/>
</dbReference>
<dbReference type="FunFam" id="3.40.50.150:FF:000128">
    <property type="entry name" value="DNA (cytosine-5)-methyltransferase"/>
    <property type="match status" value="1"/>
</dbReference>
<dbReference type="FunFam" id="3.90.120.10:FF:000002">
    <property type="entry name" value="DNA (cytosine-5)-methyltransferase"/>
    <property type="match status" value="1"/>
</dbReference>
<dbReference type="FunFam" id="3.90.120.10:FF:000004">
    <property type="entry name" value="DNA (cytosine-5)-methyltransferase"/>
    <property type="match status" value="1"/>
</dbReference>
<dbReference type="FunFam" id="2.30.30.490:FF:000046">
    <property type="entry name" value="DNA (cytosine-5)-methyltransferase 3"/>
    <property type="match status" value="1"/>
</dbReference>
<dbReference type="Gene3D" id="2.30.30.490">
    <property type="match status" value="2"/>
</dbReference>
<dbReference type="Gene3D" id="3.90.120.10">
    <property type="entry name" value="DNA Methylase, subunit A, domain 2"/>
    <property type="match status" value="2"/>
</dbReference>
<dbReference type="Gene3D" id="3.40.50.150">
    <property type="entry name" value="Vaccinia Virus protein VP39"/>
    <property type="match status" value="1"/>
</dbReference>
<dbReference type="InterPro" id="IPR001025">
    <property type="entry name" value="BAH_dom"/>
</dbReference>
<dbReference type="InterPro" id="IPR043151">
    <property type="entry name" value="BAH_sf"/>
</dbReference>
<dbReference type="InterPro" id="IPR050390">
    <property type="entry name" value="C5-Methyltransferase"/>
</dbReference>
<dbReference type="InterPro" id="IPR018117">
    <property type="entry name" value="C5_DNA_meth_AS"/>
</dbReference>
<dbReference type="InterPro" id="IPR001525">
    <property type="entry name" value="C5_MeTfrase"/>
</dbReference>
<dbReference type="InterPro" id="IPR031303">
    <property type="entry name" value="C5_meth_CS"/>
</dbReference>
<dbReference type="InterPro" id="IPR022702">
    <property type="entry name" value="Cytosine_MeTrfase1_RFD"/>
</dbReference>
<dbReference type="InterPro" id="IPR017198">
    <property type="entry name" value="DNMT1-like"/>
</dbReference>
<dbReference type="InterPro" id="IPR029063">
    <property type="entry name" value="SAM-dependent_MTases_sf"/>
</dbReference>
<dbReference type="NCBIfam" id="TIGR00675">
    <property type="entry name" value="dcm"/>
    <property type="match status" value="1"/>
</dbReference>
<dbReference type="PANTHER" id="PTHR10629">
    <property type="entry name" value="CYTOSINE-SPECIFIC METHYLTRANSFERASE"/>
    <property type="match status" value="1"/>
</dbReference>
<dbReference type="PANTHER" id="PTHR10629:SF52">
    <property type="entry name" value="DNA (CYTOSINE-5)-METHYLTRANSFERASE 1"/>
    <property type="match status" value="1"/>
</dbReference>
<dbReference type="Pfam" id="PF01426">
    <property type="entry name" value="BAH"/>
    <property type="match status" value="2"/>
</dbReference>
<dbReference type="Pfam" id="PF00145">
    <property type="entry name" value="DNA_methylase"/>
    <property type="match status" value="2"/>
</dbReference>
<dbReference type="Pfam" id="PF12047">
    <property type="entry name" value="DNMT1-RFD"/>
    <property type="match status" value="2"/>
</dbReference>
<dbReference type="PIRSF" id="PIRSF037404">
    <property type="entry name" value="DNMT1"/>
    <property type="match status" value="1"/>
</dbReference>
<dbReference type="PRINTS" id="PR00105">
    <property type="entry name" value="C5METTRFRASE"/>
</dbReference>
<dbReference type="SMART" id="SM00439">
    <property type="entry name" value="BAH"/>
    <property type="match status" value="2"/>
</dbReference>
<dbReference type="SUPFAM" id="SSF53335">
    <property type="entry name" value="S-adenosyl-L-methionine-dependent methyltransferases"/>
    <property type="match status" value="1"/>
</dbReference>
<dbReference type="PROSITE" id="PS51038">
    <property type="entry name" value="BAH"/>
    <property type="match status" value="2"/>
</dbReference>
<dbReference type="PROSITE" id="PS00094">
    <property type="entry name" value="C5_MTASE_1"/>
    <property type="match status" value="1"/>
</dbReference>
<dbReference type="PROSITE" id="PS00095">
    <property type="entry name" value="C5_MTASE_2"/>
    <property type="match status" value="1"/>
</dbReference>
<dbReference type="PROSITE" id="PS51679">
    <property type="entry name" value="SAM_MT_C5"/>
    <property type="match status" value="1"/>
</dbReference>
<name>DNMT2_ARATH</name>